<protein>
    <recommendedName>
        <fullName>26S proteasome non-ATPase regulatory subunit 2</fullName>
    </recommendedName>
    <alternativeName>
        <fullName>26S proteasome regulatory subunit RPN1</fullName>
    </alternativeName>
    <alternativeName>
        <fullName>26S proteasome regulatory subunit S2</fullName>
    </alternativeName>
    <alternativeName>
        <fullName>26S proteasome subunit p97</fullName>
    </alternativeName>
</protein>
<comment type="function">
    <text evidence="1">Component of the 26S proteasome, a multiprotein complex involved in the ATP-dependent degradation of ubiquitinated proteins. This complex plays a key role in the maintenance of protein homeostasis by removing misfolded or damaged proteins, which could impair cellular functions, and by removing proteins whose functions are no longer required. Therefore, the proteasome participates in numerous cellular processes, including cell cycle progression, apoptosis, or DNA damage repair.</text>
</comment>
<comment type="function">
    <text evidence="1">Binds to the intracellular domain of tumor necrosis factor type 1 receptor. The binding domain of TRAP1 and TRAP2 resides outside the death domain of TNFR1.</text>
</comment>
<comment type="subunit">
    <text evidence="1 4 5">Component of the 19S proteasome regulatory particle complex. The 26S proteasome consists of a 20S core particle (CP) and two 19S regulatory subunits (RP). The regulatory particle is made of a lid composed of 9 subunits, a base containing 6 ATPases and few additional components including PSMD2 (By similarity). Interacts with RPGRIP1L (PubMed:26150391). Interacts with CRY1 in a KDM8-dependent manner (PubMed:30500822). Interacts (via C-terminus) with phosphatase UBLCP1 (via ubiquitin-like domain); the interaction recruits UBLCP1 to the 19S regulatory particle where it dephosphorylates 19S subunit PSMC2/RPT1 which impairs PSMC2 ATPase activity and disrupts 26S proteasome assembly (By similarity).</text>
</comment>
<comment type="similarity">
    <text evidence="6">Belongs to the proteasome subunit S2 family.</text>
</comment>
<gene>
    <name type="primary">Psmd2</name>
</gene>
<organism>
    <name type="scientific">Mus musculus</name>
    <name type="common">Mouse</name>
    <dbReference type="NCBI Taxonomy" id="10090"/>
    <lineage>
        <taxon>Eukaryota</taxon>
        <taxon>Metazoa</taxon>
        <taxon>Chordata</taxon>
        <taxon>Craniata</taxon>
        <taxon>Vertebrata</taxon>
        <taxon>Euteleostomi</taxon>
        <taxon>Mammalia</taxon>
        <taxon>Eutheria</taxon>
        <taxon>Euarchontoglires</taxon>
        <taxon>Glires</taxon>
        <taxon>Rodentia</taxon>
        <taxon>Myomorpha</taxon>
        <taxon>Muroidea</taxon>
        <taxon>Muridae</taxon>
        <taxon>Murinae</taxon>
        <taxon>Mus</taxon>
        <taxon>Mus</taxon>
    </lineage>
</organism>
<feature type="chain" id="PRO_0000173811" description="26S proteasome non-ATPase regulatory subunit 2">
    <location>
        <begin position="1"/>
        <end position="908"/>
    </location>
</feature>
<feature type="repeat" description="PC 1">
    <location>
        <begin position="409"/>
        <end position="442"/>
    </location>
</feature>
<feature type="repeat" description="PC 2">
    <location>
        <begin position="443"/>
        <end position="479"/>
    </location>
</feature>
<feature type="repeat" description="PC 3">
    <location>
        <begin position="480"/>
        <end position="514"/>
    </location>
</feature>
<feature type="repeat" description="PC 4">
    <location>
        <begin position="517"/>
        <end position="551"/>
    </location>
</feature>
<feature type="repeat" description="PC 5">
    <location>
        <begin position="560"/>
        <end position="589"/>
    </location>
</feature>
<feature type="repeat" description="PC 6">
    <location>
        <begin position="692"/>
        <end position="723"/>
    </location>
</feature>
<feature type="repeat" description="PC 7">
    <location>
        <begin position="742"/>
        <end position="757"/>
    </location>
</feature>
<feature type="region of interest" description="Disordered" evidence="2">
    <location>
        <begin position="1"/>
        <end position="51"/>
    </location>
</feature>
<feature type="region of interest" description="Disordered" evidence="2">
    <location>
        <begin position="623"/>
        <end position="645"/>
    </location>
</feature>
<feature type="region of interest" description="Required for interaction with UBLCP1" evidence="1">
    <location>
        <begin position="708"/>
        <end position="903"/>
    </location>
</feature>
<feature type="compositionally biased region" description="Polar residues" evidence="2">
    <location>
        <begin position="10"/>
        <end position="22"/>
    </location>
</feature>
<feature type="compositionally biased region" description="Basic and acidic residues" evidence="2">
    <location>
        <begin position="24"/>
        <end position="51"/>
    </location>
</feature>
<feature type="compositionally biased region" description="Basic and acidic residues" evidence="2">
    <location>
        <begin position="623"/>
        <end position="643"/>
    </location>
</feature>
<feature type="modified residue" description="N-acetylmethionine" evidence="3 7">
    <location>
        <position position="1"/>
    </location>
</feature>
<feature type="modified residue" description="Phosphothreonine" evidence="7 9">
    <location>
        <position position="9"/>
    </location>
</feature>
<feature type="modified residue" description="Phosphothreonine" evidence="8">
    <location>
        <position position="20"/>
    </location>
</feature>
<feature type="modified residue" description="Phosphoserine" evidence="1">
    <location>
        <position position="29"/>
    </location>
</feature>
<feature type="modified residue" description="Phosphoserine" evidence="1">
    <location>
        <position position="147"/>
    </location>
</feature>
<feature type="modified residue" description="Phosphotyrosine" evidence="1">
    <location>
        <position position="194"/>
    </location>
</feature>
<feature type="modified residue" description="Phosphoserine" evidence="9">
    <location>
        <position position="361"/>
    </location>
</feature>
<feature type="modified residue" description="Phosphoserine" evidence="1">
    <location>
        <position position="363"/>
    </location>
</feature>
<feature type="modified residue" description="N6-acetyllysine" evidence="10">
    <location>
        <position position="551"/>
    </location>
</feature>
<proteinExistence type="evidence at protein level"/>
<sequence length="908" mass="100203">MEEGGRDKTPVQSQQPSATTPSGADEKSSGKERRDAGEKDKEQELSEEDKQLQDELEMLVERLGEKDTSLYRPALEELRRQIRSSTTSMTSVPKPLKFLRPHYGKLKEIYENMAPGENKCFAADIISVLAMTMSGERECLKYRLVGSQEELASWGHEYVRHLAGEVAKEWQELDDAEKAQREPLLTLVKEIVPYNMAHNAEHEACDLLMEIEQVDMLEKDIDENAYAKVCLYLTSCVNYVPEPENSALLRCALGVFRKFSRFPEALRLALMLNDMELVEDIFTSCKDVVVQKQMAFMLGRHGVFLELSEDVEEYEDLTEIMSNVQLNSNFLALARELDIMEPKVPDDIYKTHLENNRFGGSGSQVDSARMNLASSFVNGFVNAAFGQDKLLTDDGNKWLYKNKDHGMLSAAASLGMILLWDVDGGLTQIDKYLYSSEDYIKSGALLACGIVNSGVRNECDPALALLSDYVLHNSNTMRLGSIFGLGLAYAGSNREDVLTLLLPVMGDSKSSMEVAGVTALACGMIAVGSCNGDVTSTILQTIMEKSETELKDTYARWLPLGLGLNHLGKGEAIEAILAALEVVSEPFRSFANTLVDVCAYAGSGNVLKVQQLLHICSEHFDSKEKEEDKDKKEKKDKDKKEAPADMGAHQGVAVLGIALIAMGEEIGAEMALRTFGHLLRYGEPTLRRAVPLALALISVSNPRLNILDTLSKFSHDADPEVSYNSIFAMGMVGSGTNNARLAAMLRQLAQYHAKDPNNLFMVRLAQGLTHLGKGTLTLCPYHSDRQLMSQVAVAGLLTVLVSFLDVRNIILGKSHYVLYGLVAAMQPRMLVTFDEELRPLPVSVRVGQAVDVVGQAGKPKTITGFQTHTTPVLLAHGERAELATEEFLPVTPILEGFVILRKNPNYDL</sequence>
<name>PSMD2_MOUSE</name>
<dbReference type="EMBL" id="BC021508">
    <property type="protein sequence ID" value="AAH21508.1"/>
    <property type="molecule type" value="mRNA"/>
</dbReference>
<dbReference type="EMBL" id="BC024830">
    <property type="protein sequence ID" value="AAH24830.1"/>
    <property type="molecule type" value="mRNA"/>
</dbReference>
<dbReference type="EMBL" id="BC027388">
    <property type="protein sequence ID" value="AAH27388.1"/>
    <property type="molecule type" value="mRNA"/>
</dbReference>
<dbReference type="EMBL" id="BC027767">
    <property type="protein sequence ID" value="AAH27767.1"/>
    <property type="molecule type" value="mRNA"/>
</dbReference>
<dbReference type="EMBL" id="BC027822">
    <property type="protein sequence ID" value="AAH27822.1"/>
    <property type="molecule type" value="mRNA"/>
</dbReference>
<dbReference type="EMBL" id="BC028851">
    <property type="protein sequence ID" value="AAH28851.1"/>
    <property type="molecule type" value="mRNA"/>
</dbReference>
<dbReference type="EMBL" id="BC031128">
    <property type="protein sequence ID" value="AAH31128.1"/>
    <property type="molecule type" value="mRNA"/>
</dbReference>
<dbReference type="CCDS" id="CCDS28053.1"/>
<dbReference type="RefSeq" id="NP_598862.1">
    <property type="nucleotide sequence ID" value="NM_134101.2"/>
</dbReference>
<dbReference type="RefSeq" id="XP_030104899.1">
    <property type="nucleotide sequence ID" value="XM_030249039.1"/>
</dbReference>
<dbReference type="SMR" id="Q8VDM4"/>
<dbReference type="BioGRID" id="204127">
    <property type="interactions" value="74"/>
</dbReference>
<dbReference type="FunCoup" id="Q8VDM4">
    <property type="interactions" value="3152"/>
</dbReference>
<dbReference type="IntAct" id="Q8VDM4">
    <property type="interactions" value="5"/>
</dbReference>
<dbReference type="STRING" id="10090.ENSMUSP00000007212"/>
<dbReference type="GlyGen" id="Q8VDM4">
    <property type="glycosylation" value="2 sites, 1 O-linked glycan (1 site)"/>
</dbReference>
<dbReference type="iPTMnet" id="Q8VDM4"/>
<dbReference type="PhosphoSitePlus" id="Q8VDM4"/>
<dbReference type="SwissPalm" id="Q8VDM4"/>
<dbReference type="jPOST" id="Q8VDM4"/>
<dbReference type="PaxDb" id="10090-ENSMUSP00000007212"/>
<dbReference type="ProteomicsDB" id="301990"/>
<dbReference type="Pumba" id="Q8VDM4"/>
<dbReference type="Antibodypedia" id="33807">
    <property type="antibodies" value="600 antibodies from 35 providers"/>
</dbReference>
<dbReference type="DNASU" id="21762"/>
<dbReference type="Ensembl" id="ENSMUST00000007212.9">
    <property type="protein sequence ID" value="ENSMUSP00000007212.9"/>
    <property type="gene ID" value="ENSMUSG00000006998.17"/>
</dbReference>
<dbReference type="GeneID" id="21762"/>
<dbReference type="KEGG" id="mmu:21762"/>
<dbReference type="UCSC" id="uc007yqq.2">
    <property type="organism name" value="mouse"/>
</dbReference>
<dbReference type="AGR" id="MGI:1096584"/>
<dbReference type="CTD" id="5708"/>
<dbReference type="MGI" id="MGI:1096584">
    <property type="gene designation" value="Psmd2"/>
</dbReference>
<dbReference type="VEuPathDB" id="HostDB:ENSMUSG00000006998"/>
<dbReference type="eggNOG" id="KOG2005">
    <property type="taxonomic scope" value="Eukaryota"/>
</dbReference>
<dbReference type="GeneTree" id="ENSGT00940000153386"/>
<dbReference type="HOGENOM" id="CLU_008705_1_0_1"/>
<dbReference type="InParanoid" id="Q8VDM4"/>
<dbReference type="OMA" id="GTCNGDI"/>
<dbReference type="OrthoDB" id="10252509at2759"/>
<dbReference type="PhylomeDB" id="Q8VDM4"/>
<dbReference type="TreeFam" id="TF105739"/>
<dbReference type="Reactome" id="R-MMU-1169091">
    <property type="pathway name" value="Activation of NF-kappaB in B cells"/>
</dbReference>
<dbReference type="Reactome" id="R-MMU-1234176">
    <property type="pathway name" value="Oxygen-dependent proline hydroxylation of Hypoxia-inducible Factor Alpha"/>
</dbReference>
<dbReference type="Reactome" id="R-MMU-1236978">
    <property type="pathway name" value="Cross-presentation of soluble exogenous antigens (endosomes)"/>
</dbReference>
<dbReference type="Reactome" id="R-MMU-174084">
    <property type="pathway name" value="Autodegradation of Cdh1 by Cdh1:APC/C"/>
</dbReference>
<dbReference type="Reactome" id="R-MMU-174154">
    <property type="pathway name" value="APC/C:Cdc20 mediated degradation of Securin"/>
</dbReference>
<dbReference type="Reactome" id="R-MMU-174178">
    <property type="pathway name" value="APC/C:Cdh1 mediated degradation of Cdc20 and other APC/C:Cdh1 targeted proteins in late mitosis/early G1"/>
</dbReference>
<dbReference type="Reactome" id="R-MMU-174184">
    <property type="pathway name" value="Cdc20:Phospho-APC/C mediated degradation of Cyclin A"/>
</dbReference>
<dbReference type="Reactome" id="R-MMU-187577">
    <property type="pathway name" value="SCF(Skp2)-mediated degradation of p27/p21"/>
</dbReference>
<dbReference type="Reactome" id="R-MMU-195253">
    <property type="pathway name" value="Degradation of beta-catenin by the destruction complex"/>
</dbReference>
<dbReference type="Reactome" id="R-MMU-202424">
    <property type="pathway name" value="Downstream TCR signaling"/>
</dbReference>
<dbReference type="Reactome" id="R-MMU-2467813">
    <property type="pathway name" value="Separation of Sister Chromatids"/>
</dbReference>
<dbReference type="Reactome" id="R-MMU-2871837">
    <property type="pathway name" value="FCERI mediated NF-kB activation"/>
</dbReference>
<dbReference type="Reactome" id="R-MMU-349425">
    <property type="pathway name" value="Autodegradation of the E3 ubiquitin ligase COP1"/>
</dbReference>
<dbReference type="Reactome" id="R-MMU-350562">
    <property type="pathway name" value="Regulation of ornithine decarboxylase (ODC)"/>
</dbReference>
<dbReference type="Reactome" id="R-MMU-382556">
    <property type="pathway name" value="ABC-family proteins mediated transport"/>
</dbReference>
<dbReference type="Reactome" id="R-MMU-450408">
    <property type="pathway name" value="AUF1 (hnRNP D0) binds and destabilizes mRNA"/>
</dbReference>
<dbReference type="Reactome" id="R-MMU-4608870">
    <property type="pathway name" value="Asymmetric localization of PCP proteins"/>
</dbReference>
<dbReference type="Reactome" id="R-MMU-4641257">
    <property type="pathway name" value="Degradation of AXIN"/>
</dbReference>
<dbReference type="Reactome" id="R-MMU-4641258">
    <property type="pathway name" value="Degradation of DVL"/>
</dbReference>
<dbReference type="Reactome" id="R-MMU-5358346">
    <property type="pathway name" value="Hedgehog ligand biogenesis"/>
</dbReference>
<dbReference type="Reactome" id="R-MMU-5607761">
    <property type="pathway name" value="Dectin-1 mediated noncanonical NF-kB signaling"/>
</dbReference>
<dbReference type="Reactome" id="R-MMU-5607764">
    <property type="pathway name" value="CLEC7A (Dectin-1) signaling"/>
</dbReference>
<dbReference type="Reactome" id="R-MMU-5610780">
    <property type="pathway name" value="Degradation of GLI1 by the proteasome"/>
</dbReference>
<dbReference type="Reactome" id="R-MMU-5610785">
    <property type="pathway name" value="GLI3 is processed to GLI3R by the proteasome"/>
</dbReference>
<dbReference type="Reactome" id="R-MMU-5632684">
    <property type="pathway name" value="Hedgehog 'on' state"/>
</dbReference>
<dbReference type="Reactome" id="R-MMU-5658442">
    <property type="pathway name" value="Regulation of RAS by GAPs"/>
</dbReference>
<dbReference type="Reactome" id="R-MMU-5668541">
    <property type="pathway name" value="TNFR2 non-canonical NF-kB pathway"/>
</dbReference>
<dbReference type="Reactome" id="R-MMU-5676590">
    <property type="pathway name" value="NIK--&gt;noncanonical NF-kB signaling"/>
</dbReference>
<dbReference type="Reactome" id="R-MMU-5687128">
    <property type="pathway name" value="MAPK6/MAPK4 signaling"/>
</dbReference>
<dbReference type="Reactome" id="R-MMU-5689603">
    <property type="pathway name" value="UCH proteinases"/>
</dbReference>
<dbReference type="Reactome" id="R-MMU-5689880">
    <property type="pathway name" value="Ub-specific processing proteases"/>
</dbReference>
<dbReference type="Reactome" id="R-MMU-6798695">
    <property type="pathway name" value="Neutrophil degranulation"/>
</dbReference>
<dbReference type="Reactome" id="R-MMU-68867">
    <property type="pathway name" value="Assembly of the pre-replicative complex"/>
</dbReference>
<dbReference type="Reactome" id="R-MMU-68949">
    <property type="pathway name" value="Orc1 removal from chromatin"/>
</dbReference>
<dbReference type="Reactome" id="R-MMU-69017">
    <property type="pathway name" value="CDK-mediated phosphorylation and removal of Cdc6"/>
</dbReference>
<dbReference type="Reactome" id="R-MMU-69481">
    <property type="pathway name" value="G2/M Checkpoints"/>
</dbReference>
<dbReference type="Reactome" id="R-MMU-69601">
    <property type="pathway name" value="Ubiquitin Mediated Degradation of Phosphorylated Cdc25A"/>
</dbReference>
<dbReference type="Reactome" id="R-MMU-75815">
    <property type="pathway name" value="Ubiquitin-dependent degradation of Cyclin D"/>
</dbReference>
<dbReference type="Reactome" id="R-MMU-8852276">
    <property type="pathway name" value="The role of GTSE1 in G2/M progression after G2 checkpoint"/>
</dbReference>
<dbReference type="Reactome" id="R-MMU-8854050">
    <property type="pathway name" value="FBXL7 down-regulates AURKA during mitotic entry and in early mitosis"/>
</dbReference>
<dbReference type="Reactome" id="R-MMU-8939236">
    <property type="pathway name" value="RUNX1 regulates transcription of genes involved in differentiation of HSCs"/>
</dbReference>
<dbReference type="Reactome" id="R-MMU-8939902">
    <property type="pathway name" value="Regulation of RUNX2 expression and activity"/>
</dbReference>
<dbReference type="Reactome" id="R-MMU-8941858">
    <property type="pathway name" value="Regulation of RUNX3 expression and activity"/>
</dbReference>
<dbReference type="Reactome" id="R-MMU-8948751">
    <property type="pathway name" value="Regulation of PTEN stability and activity"/>
</dbReference>
<dbReference type="Reactome" id="R-MMU-8951664">
    <property type="pathway name" value="Neddylation"/>
</dbReference>
<dbReference type="Reactome" id="R-MMU-9020702">
    <property type="pathway name" value="Interleukin-1 signaling"/>
</dbReference>
<dbReference type="Reactome" id="R-MMU-9755511">
    <property type="pathway name" value="KEAP1-NFE2L2 pathway"/>
</dbReference>
<dbReference type="Reactome" id="R-MMU-9762114">
    <property type="pathway name" value="GSK3B and BTRC:CUL1-mediated-degradation of NFE2L2"/>
</dbReference>
<dbReference type="Reactome" id="R-MMU-983168">
    <property type="pathway name" value="Antigen processing: Ubiquitination &amp; Proteasome degradation"/>
</dbReference>
<dbReference type="Reactome" id="R-MMU-9907900">
    <property type="pathway name" value="Proteasome assembly"/>
</dbReference>
<dbReference type="BioGRID-ORCS" id="21762">
    <property type="hits" value="24 hits in 79 CRISPR screens"/>
</dbReference>
<dbReference type="CD-CODE" id="CE726F99">
    <property type="entry name" value="Postsynaptic density"/>
</dbReference>
<dbReference type="ChiTaRS" id="Psmd2">
    <property type="organism name" value="mouse"/>
</dbReference>
<dbReference type="PRO" id="PR:Q8VDM4"/>
<dbReference type="Proteomes" id="UP000000589">
    <property type="component" value="Chromosome 16"/>
</dbReference>
<dbReference type="RNAct" id="Q8VDM4">
    <property type="molecule type" value="protein"/>
</dbReference>
<dbReference type="Bgee" id="ENSMUSG00000006998">
    <property type="expression patterns" value="Expressed in embryonic brain and 73 other cell types or tissues"/>
</dbReference>
<dbReference type="ExpressionAtlas" id="Q8VDM4">
    <property type="expression patterns" value="baseline and differential"/>
</dbReference>
<dbReference type="GO" id="GO:0022624">
    <property type="term" value="C:proteasome accessory complex"/>
    <property type="evidence" value="ECO:0000314"/>
    <property type="project" value="UniProtKB"/>
</dbReference>
<dbReference type="GO" id="GO:0000502">
    <property type="term" value="C:proteasome complex"/>
    <property type="evidence" value="ECO:0000314"/>
    <property type="project" value="MGI"/>
</dbReference>
<dbReference type="GO" id="GO:0005838">
    <property type="term" value="C:proteasome regulatory particle"/>
    <property type="evidence" value="ECO:0000314"/>
    <property type="project" value="MGI"/>
</dbReference>
<dbReference type="GO" id="GO:0030234">
    <property type="term" value="F:enzyme regulator activity"/>
    <property type="evidence" value="ECO:0007669"/>
    <property type="project" value="InterPro"/>
</dbReference>
<dbReference type="GO" id="GO:0042176">
    <property type="term" value="P:regulation of protein catabolic process"/>
    <property type="evidence" value="ECO:0007669"/>
    <property type="project" value="InterPro"/>
</dbReference>
<dbReference type="FunFam" id="1.25.10.10:FF:000026">
    <property type="entry name" value="26S proteasome non-ATPase regulatory subunit 2"/>
    <property type="match status" value="1"/>
</dbReference>
<dbReference type="Gene3D" id="1.25.10.10">
    <property type="entry name" value="Leucine-rich Repeat Variant"/>
    <property type="match status" value="1"/>
</dbReference>
<dbReference type="InterPro" id="IPR016643">
    <property type="entry name" value="26S_Psome_Rpn1"/>
</dbReference>
<dbReference type="InterPro" id="IPR011989">
    <property type="entry name" value="ARM-like"/>
</dbReference>
<dbReference type="InterPro" id="IPR016024">
    <property type="entry name" value="ARM-type_fold"/>
</dbReference>
<dbReference type="InterPro" id="IPR002015">
    <property type="entry name" value="Proteasome/cyclosome_rpt"/>
</dbReference>
<dbReference type="InterPro" id="IPR041433">
    <property type="entry name" value="RPN1_C"/>
</dbReference>
<dbReference type="InterPro" id="IPR040892">
    <property type="entry name" value="RPN1_N"/>
</dbReference>
<dbReference type="PANTHER" id="PTHR10943">
    <property type="entry name" value="26S PROTEASOME NON-ATPASE REGULATORY SUBUNIT"/>
    <property type="match status" value="1"/>
</dbReference>
<dbReference type="PANTHER" id="PTHR10943:SF1">
    <property type="entry name" value="26S PROTEASOME NON-ATPASE REGULATORY SUBUNIT 2"/>
    <property type="match status" value="1"/>
</dbReference>
<dbReference type="Pfam" id="PF01851">
    <property type="entry name" value="PC_rep"/>
    <property type="match status" value="2"/>
</dbReference>
<dbReference type="Pfam" id="PF18051">
    <property type="entry name" value="RPN1_C"/>
    <property type="match status" value="1"/>
</dbReference>
<dbReference type="Pfam" id="PF17781">
    <property type="entry name" value="RPN1_RPN2_N"/>
    <property type="match status" value="1"/>
</dbReference>
<dbReference type="PIRSF" id="PIRSF015965">
    <property type="entry name" value="26S_Psome_Rpn1"/>
    <property type="match status" value="1"/>
</dbReference>
<dbReference type="SUPFAM" id="SSF48371">
    <property type="entry name" value="ARM repeat"/>
    <property type="match status" value="1"/>
</dbReference>
<reference key="1">
    <citation type="journal article" date="2004" name="Genome Res.">
        <title>The status, quality, and expansion of the NIH full-length cDNA project: the Mammalian Gene Collection (MGC).</title>
        <authorList>
            <consortium name="The MGC Project Team"/>
        </authorList>
    </citation>
    <scope>NUCLEOTIDE SEQUENCE [LARGE SCALE MRNA]</scope>
    <source>
        <strain>Czech II</strain>
        <strain>FVB/N</strain>
        <tissue>Colon</tissue>
        <tissue>Eye</tissue>
        <tissue>Mammary tumor</tissue>
    </source>
</reference>
<reference key="2">
    <citation type="journal article" date="2006" name="Circ. Res.">
        <title>Mapping the murine cardiac 26S proteasome complexes.</title>
        <authorList>
            <person name="Gomes A.V."/>
            <person name="Zong C."/>
            <person name="Edmondson R.D."/>
            <person name="Li X."/>
            <person name="Stefani E."/>
            <person name="Zhang J."/>
            <person name="Jones R.C."/>
            <person name="Thyparambil S."/>
            <person name="Wang G.W."/>
            <person name="Qiao X."/>
            <person name="Bardag-Gorce F."/>
            <person name="Ping P."/>
        </authorList>
    </citation>
    <scope>IDENTIFICATION IN THE 19S PROTEASOME REGULATORY COMPLEX</scope>
    <scope>ACETYLATION AT MET-1</scope>
</reference>
<reference key="3">
    <citation type="journal article" date="2007" name="Proc. Natl. Acad. Sci. U.S.A.">
        <title>Large-scale phosphorylation analysis of mouse liver.</title>
        <authorList>
            <person name="Villen J."/>
            <person name="Beausoleil S.A."/>
            <person name="Gerber S.A."/>
            <person name="Gygi S.P."/>
        </authorList>
    </citation>
    <scope>ACETYLATION [LARGE SCALE ANALYSIS] AT MET-1</scope>
    <scope>PHOSPHORYLATION [LARGE SCALE ANALYSIS] AT THR-9</scope>
    <scope>IDENTIFICATION BY MASS SPECTROMETRY [LARGE SCALE ANALYSIS]</scope>
    <source>
        <tissue>Liver</tissue>
    </source>
</reference>
<reference key="4">
    <citation type="journal article" date="2009" name="Mol. Cell. Proteomics">
        <title>Large scale localization of protein phosphorylation by use of electron capture dissociation mass spectrometry.</title>
        <authorList>
            <person name="Sweet S.M."/>
            <person name="Bailey C.M."/>
            <person name="Cunningham D.L."/>
            <person name="Heath J.K."/>
            <person name="Cooper H.J."/>
        </authorList>
    </citation>
    <scope>PHOSPHORYLATION [LARGE SCALE ANALYSIS] AT THR-20</scope>
    <scope>IDENTIFICATION BY MASS SPECTROMETRY [LARGE SCALE ANALYSIS]</scope>
    <source>
        <tissue>Embryonic fibroblast</tissue>
    </source>
</reference>
<reference key="5">
    <citation type="journal article" date="2010" name="Cell">
        <title>A tissue-specific atlas of mouse protein phosphorylation and expression.</title>
        <authorList>
            <person name="Huttlin E.L."/>
            <person name="Jedrychowski M.P."/>
            <person name="Elias J.E."/>
            <person name="Goswami T."/>
            <person name="Rad R."/>
            <person name="Beausoleil S.A."/>
            <person name="Villen J."/>
            <person name="Haas W."/>
            <person name="Sowa M.E."/>
            <person name="Gygi S.P."/>
        </authorList>
    </citation>
    <scope>PHOSPHORYLATION [LARGE SCALE ANALYSIS] AT THR-9 AND SER-361</scope>
    <scope>IDENTIFICATION BY MASS SPECTROMETRY [LARGE SCALE ANALYSIS]</scope>
    <source>
        <tissue>Brain</tissue>
        <tissue>Brown adipose tissue</tissue>
        <tissue>Heart</tissue>
        <tissue>Kidney</tissue>
        <tissue>Liver</tissue>
        <tissue>Lung</tissue>
        <tissue>Pancreas</tissue>
        <tissue>Spleen</tissue>
        <tissue>Testis</tissue>
    </source>
</reference>
<reference key="6">
    <citation type="journal article" date="2013" name="Mol. Cell">
        <title>SIRT5-mediated lysine desuccinylation impacts diverse metabolic pathways.</title>
        <authorList>
            <person name="Park J."/>
            <person name="Chen Y."/>
            <person name="Tishkoff D.X."/>
            <person name="Peng C."/>
            <person name="Tan M."/>
            <person name="Dai L."/>
            <person name="Xie Z."/>
            <person name="Zhang Y."/>
            <person name="Zwaans B.M."/>
            <person name="Skinner M.E."/>
            <person name="Lombard D.B."/>
            <person name="Zhao Y."/>
        </authorList>
    </citation>
    <scope>ACETYLATION [LARGE SCALE ANALYSIS] AT LYS-551</scope>
    <scope>IDENTIFICATION BY MASS SPECTROMETRY [LARGE SCALE ANALYSIS]</scope>
    <source>
        <tissue>Embryonic fibroblast</tissue>
    </source>
</reference>
<reference key="7">
    <citation type="journal article" date="2015" name="J. Cell Biol.">
        <title>The transition zone protein Rpgrip1l regulates proteasomal activity at the primary cilium.</title>
        <authorList>
            <person name="Gerhardt C."/>
            <person name="Lier J.M."/>
            <person name="Burmuehl S."/>
            <person name="Struchtrup A."/>
            <person name="Deutschmann K."/>
            <person name="Vetter M."/>
            <person name="Leu T."/>
            <person name="Reeg S."/>
            <person name="Grune T."/>
            <person name="Ruether U."/>
        </authorList>
    </citation>
    <scope>INTERACTION WITH RPGRIP1L</scope>
</reference>
<reference key="8">
    <citation type="journal article" date="2018" name="PLoS Biol.">
        <title>JMJD5 links CRY1 function and proteasomal degradation.</title>
        <authorList>
            <person name="Saran A.R."/>
            <person name="Kalinowska D."/>
            <person name="Oh S."/>
            <person name="Janknecht R."/>
            <person name="DiTacchio L."/>
        </authorList>
    </citation>
    <scope>INTERACTION WITH CRY1</scope>
</reference>
<keyword id="KW-0007">Acetylation</keyword>
<keyword id="KW-0597">Phosphoprotein</keyword>
<keyword id="KW-0647">Proteasome</keyword>
<keyword id="KW-1185">Reference proteome</keyword>
<keyword id="KW-0677">Repeat</keyword>
<evidence type="ECO:0000250" key="1">
    <source>
        <dbReference type="UniProtKB" id="Q13200"/>
    </source>
</evidence>
<evidence type="ECO:0000256" key="2">
    <source>
        <dbReference type="SAM" id="MobiDB-lite"/>
    </source>
</evidence>
<evidence type="ECO:0000269" key="3">
    <source>
    </source>
</evidence>
<evidence type="ECO:0000269" key="4">
    <source>
    </source>
</evidence>
<evidence type="ECO:0000269" key="5">
    <source>
    </source>
</evidence>
<evidence type="ECO:0000305" key="6"/>
<evidence type="ECO:0007744" key="7">
    <source>
    </source>
</evidence>
<evidence type="ECO:0007744" key="8">
    <source>
    </source>
</evidence>
<evidence type="ECO:0007744" key="9">
    <source>
    </source>
</evidence>
<evidence type="ECO:0007744" key="10">
    <source>
    </source>
</evidence>
<accession>Q8VDM4</accession>